<gene>
    <name evidence="1" type="primary">murD</name>
    <name type="ordered locus">SG0447</name>
</gene>
<dbReference type="EC" id="6.3.2.9" evidence="1"/>
<dbReference type="EMBL" id="AP008232">
    <property type="protein sequence ID" value="BAE73722.1"/>
    <property type="molecule type" value="Genomic_DNA"/>
</dbReference>
<dbReference type="RefSeq" id="WP_011410420.1">
    <property type="nucleotide sequence ID" value="NC_007712.1"/>
</dbReference>
<dbReference type="SMR" id="Q2NVV3"/>
<dbReference type="STRING" id="343509.SG0447"/>
<dbReference type="KEGG" id="sgl:SG0447"/>
<dbReference type="eggNOG" id="COG0771">
    <property type="taxonomic scope" value="Bacteria"/>
</dbReference>
<dbReference type="HOGENOM" id="CLU_032540_1_0_6"/>
<dbReference type="OrthoDB" id="9809796at2"/>
<dbReference type="BioCyc" id="SGLO343509:SGP1_RS04005-MONOMER"/>
<dbReference type="UniPathway" id="UPA00219"/>
<dbReference type="Proteomes" id="UP000001932">
    <property type="component" value="Chromosome"/>
</dbReference>
<dbReference type="GO" id="GO:0005737">
    <property type="term" value="C:cytoplasm"/>
    <property type="evidence" value="ECO:0007669"/>
    <property type="project" value="UniProtKB-SubCell"/>
</dbReference>
<dbReference type="GO" id="GO:0005524">
    <property type="term" value="F:ATP binding"/>
    <property type="evidence" value="ECO:0007669"/>
    <property type="project" value="UniProtKB-UniRule"/>
</dbReference>
<dbReference type="GO" id="GO:0008764">
    <property type="term" value="F:UDP-N-acetylmuramoylalanine-D-glutamate ligase activity"/>
    <property type="evidence" value="ECO:0007669"/>
    <property type="project" value="UniProtKB-UniRule"/>
</dbReference>
<dbReference type="GO" id="GO:0051301">
    <property type="term" value="P:cell division"/>
    <property type="evidence" value="ECO:0007669"/>
    <property type="project" value="UniProtKB-KW"/>
</dbReference>
<dbReference type="GO" id="GO:0071555">
    <property type="term" value="P:cell wall organization"/>
    <property type="evidence" value="ECO:0007669"/>
    <property type="project" value="UniProtKB-KW"/>
</dbReference>
<dbReference type="GO" id="GO:0009252">
    <property type="term" value="P:peptidoglycan biosynthetic process"/>
    <property type="evidence" value="ECO:0007669"/>
    <property type="project" value="UniProtKB-UniRule"/>
</dbReference>
<dbReference type="GO" id="GO:0008360">
    <property type="term" value="P:regulation of cell shape"/>
    <property type="evidence" value="ECO:0007669"/>
    <property type="project" value="UniProtKB-KW"/>
</dbReference>
<dbReference type="Gene3D" id="3.90.190.20">
    <property type="entry name" value="Mur ligase, C-terminal domain"/>
    <property type="match status" value="1"/>
</dbReference>
<dbReference type="Gene3D" id="3.40.1190.10">
    <property type="entry name" value="Mur-like, catalytic domain"/>
    <property type="match status" value="1"/>
</dbReference>
<dbReference type="Gene3D" id="3.40.50.720">
    <property type="entry name" value="NAD(P)-binding Rossmann-like Domain"/>
    <property type="match status" value="1"/>
</dbReference>
<dbReference type="HAMAP" id="MF_00639">
    <property type="entry name" value="MurD"/>
    <property type="match status" value="1"/>
</dbReference>
<dbReference type="InterPro" id="IPR036565">
    <property type="entry name" value="Mur-like_cat_sf"/>
</dbReference>
<dbReference type="InterPro" id="IPR004101">
    <property type="entry name" value="Mur_ligase_C"/>
</dbReference>
<dbReference type="InterPro" id="IPR036615">
    <property type="entry name" value="Mur_ligase_C_dom_sf"/>
</dbReference>
<dbReference type="InterPro" id="IPR013221">
    <property type="entry name" value="Mur_ligase_cen"/>
</dbReference>
<dbReference type="InterPro" id="IPR005762">
    <property type="entry name" value="MurD"/>
</dbReference>
<dbReference type="NCBIfam" id="TIGR01087">
    <property type="entry name" value="murD"/>
    <property type="match status" value="1"/>
</dbReference>
<dbReference type="PANTHER" id="PTHR43692">
    <property type="entry name" value="UDP-N-ACETYLMURAMOYLALANINE--D-GLUTAMATE LIGASE"/>
    <property type="match status" value="1"/>
</dbReference>
<dbReference type="PANTHER" id="PTHR43692:SF1">
    <property type="entry name" value="UDP-N-ACETYLMURAMOYLALANINE--D-GLUTAMATE LIGASE"/>
    <property type="match status" value="1"/>
</dbReference>
<dbReference type="Pfam" id="PF02875">
    <property type="entry name" value="Mur_ligase_C"/>
    <property type="match status" value="1"/>
</dbReference>
<dbReference type="Pfam" id="PF08245">
    <property type="entry name" value="Mur_ligase_M"/>
    <property type="match status" value="1"/>
</dbReference>
<dbReference type="Pfam" id="PF21799">
    <property type="entry name" value="MurD-like_N"/>
    <property type="match status" value="1"/>
</dbReference>
<dbReference type="SUPFAM" id="SSF51984">
    <property type="entry name" value="MurCD N-terminal domain"/>
    <property type="match status" value="1"/>
</dbReference>
<dbReference type="SUPFAM" id="SSF53623">
    <property type="entry name" value="MurD-like peptide ligases, catalytic domain"/>
    <property type="match status" value="1"/>
</dbReference>
<dbReference type="SUPFAM" id="SSF53244">
    <property type="entry name" value="MurD-like peptide ligases, peptide-binding domain"/>
    <property type="match status" value="1"/>
</dbReference>
<protein>
    <recommendedName>
        <fullName evidence="1">UDP-N-acetylmuramoylalanine--D-glutamate ligase</fullName>
        <ecNumber evidence="1">6.3.2.9</ecNumber>
    </recommendedName>
    <alternativeName>
        <fullName evidence="1">D-glutamic acid-adding enzyme</fullName>
    </alternativeName>
    <alternativeName>
        <fullName evidence="1">UDP-N-acetylmuramoyl-L-alanyl-D-glutamate synthetase</fullName>
    </alternativeName>
</protein>
<keyword id="KW-0067">ATP-binding</keyword>
<keyword id="KW-0131">Cell cycle</keyword>
<keyword id="KW-0132">Cell division</keyword>
<keyword id="KW-0133">Cell shape</keyword>
<keyword id="KW-0961">Cell wall biogenesis/degradation</keyword>
<keyword id="KW-0963">Cytoplasm</keyword>
<keyword id="KW-0436">Ligase</keyword>
<keyword id="KW-0547">Nucleotide-binding</keyword>
<keyword id="KW-0573">Peptidoglycan synthesis</keyword>
<proteinExistence type="inferred from homology"/>
<accession>Q2NVV3</accession>
<evidence type="ECO:0000255" key="1">
    <source>
        <dbReference type="HAMAP-Rule" id="MF_00639"/>
    </source>
</evidence>
<comment type="function">
    <text evidence="1">Cell wall formation. Catalyzes the addition of glutamate to the nucleotide precursor UDP-N-acetylmuramoyl-L-alanine (UMA).</text>
</comment>
<comment type="catalytic activity">
    <reaction evidence="1">
        <text>UDP-N-acetyl-alpha-D-muramoyl-L-alanine + D-glutamate + ATP = UDP-N-acetyl-alpha-D-muramoyl-L-alanyl-D-glutamate + ADP + phosphate + H(+)</text>
        <dbReference type="Rhea" id="RHEA:16429"/>
        <dbReference type="ChEBI" id="CHEBI:15378"/>
        <dbReference type="ChEBI" id="CHEBI:29986"/>
        <dbReference type="ChEBI" id="CHEBI:30616"/>
        <dbReference type="ChEBI" id="CHEBI:43474"/>
        <dbReference type="ChEBI" id="CHEBI:83898"/>
        <dbReference type="ChEBI" id="CHEBI:83900"/>
        <dbReference type="ChEBI" id="CHEBI:456216"/>
        <dbReference type="EC" id="6.3.2.9"/>
    </reaction>
</comment>
<comment type="pathway">
    <text evidence="1">Cell wall biogenesis; peptidoglycan biosynthesis.</text>
</comment>
<comment type="subcellular location">
    <subcellularLocation>
        <location evidence="1">Cytoplasm</location>
    </subcellularLocation>
</comment>
<comment type="similarity">
    <text evidence="1">Belongs to the MurCDEF family.</text>
</comment>
<name>MURD_SODGM</name>
<reference key="1">
    <citation type="journal article" date="2006" name="Genome Res.">
        <title>Massive genome erosion and functional adaptations provide insights into the symbiotic lifestyle of Sodalis glossinidius in the tsetse host.</title>
        <authorList>
            <person name="Toh H."/>
            <person name="Weiss B.L."/>
            <person name="Perkin S.A.H."/>
            <person name="Yamashita A."/>
            <person name="Oshima K."/>
            <person name="Hattori M."/>
            <person name="Aksoy S."/>
        </authorList>
    </citation>
    <scope>NUCLEOTIDE SEQUENCE [LARGE SCALE GENOMIC DNA]</scope>
    <source>
        <strain>morsitans</strain>
    </source>
</reference>
<organism>
    <name type="scientific">Sodalis glossinidius (strain morsitans)</name>
    <dbReference type="NCBI Taxonomy" id="343509"/>
    <lineage>
        <taxon>Bacteria</taxon>
        <taxon>Pseudomonadati</taxon>
        <taxon>Pseudomonadota</taxon>
        <taxon>Gammaproteobacteria</taxon>
        <taxon>Enterobacterales</taxon>
        <taxon>Bruguierivoracaceae</taxon>
        <taxon>Sodalis</taxon>
    </lineage>
</organism>
<sequence>MTDYRGEQVVIIGLGLTGLSCVDFLRRRGVTPRVMDTRFTPPGLEKLPADVPRHLGSLHEQWLLDATLIVTSPGVPLSHPALAEAAAAGVAIIGDIELFAREASAPVVAITGSNGKSTVTCMVGEMAAAAGWQVGVGGNIGLPALTLLDSPCQLYVLELSSFQLETTHSLKAAAATVLNISEDHMNRYPLGLQQYRAAKLKIYHDAAVCVVNAEDALTLPVRGHDARCISFGAERGDYCLRRHAGQTWLMARGEPLLEGAELRVGGRHNYTNALAALALSDALGIPSAASLAALRQFRGLTHRFELVHERRGVRWINDSKATNVGSTEAALNGLEVVGTLHLLLGGDGKSADFTPLTPWLQGDRVQLYCFGQDGAQLASLCPEAATLTETLEQAMRIIGSRVRAGDLVLLSPASASLDQFSNFEVRGDVFTRLAREVG</sequence>
<feature type="chain" id="PRO_0000257240" description="UDP-N-acetylmuramoylalanine--D-glutamate ligase">
    <location>
        <begin position="1"/>
        <end position="438"/>
    </location>
</feature>
<feature type="binding site" evidence="1">
    <location>
        <begin position="112"/>
        <end position="118"/>
    </location>
    <ligand>
        <name>ATP</name>
        <dbReference type="ChEBI" id="CHEBI:30616"/>
    </ligand>
</feature>